<comment type="function">
    <text evidence="1">Catalyzes the ATP-dependent 2-thiolation of cytidine in position 32 of tRNA, to form 2-thiocytidine (s(2)C32). The sulfur atoms are provided by the cysteine/cysteine desulfurase (IscS) system.</text>
</comment>
<comment type="catalytic activity">
    <reaction evidence="1">
        <text>cytidine(32) in tRNA + S-sulfanyl-L-cysteinyl-[cysteine desulfurase] + AH2 + ATP = 2-thiocytidine(32) in tRNA + L-cysteinyl-[cysteine desulfurase] + A + AMP + diphosphate + H(+)</text>
        <dbReference type="Rhea" id="RHEA:57048"/>
        <dbReference type="Rhea" id="RHEA-COMP:10288"/>
        <dbReference type="Rhea" id="RHEA-COMP:12157"/>
        <dbReference type="Rhea" id="RHEA-COMP:12158"/>
        <dbReference type="Rhea" id="RHEA-COMP:14821"/>
        <dbReference type="ChEBI" id="CHEBI:13193"/>
        <dbReference type="ChEBI" id="CHEBI:15378"/>
        <dbReference type="ChEBI" id="CHEBI:17499"/>
        <dbReference type="ChEBI" id="CHEBI:29950"/>
        <dbReference type="ChEBI" id="CHEBI:30616"/>
        <dbReference type="ChEBI" id="CHEBI:33019"/>
        <dbReference type="ChEBI" id="CHEBI:61963"/>
        <dbReference type="ChEBI" id="CHEBI:82748"/>
        <dbReference type="ChEBI" id="CHEBI:141453"/>
        <dbReference type="ChEBI" id="CHEBI:456215"/>
    </reaction>
    <physiologicalReaction direction="left-to-right" evidence="1">
        <dbReference type="Rhea" id="RHEA:57049"/>
    </physiologicalReaction>
</comment>
<comment type="cofactor">
    <cofactor evidence="1">
        <name>Mg(2+)</name>
        <dbReference type="ChEBI" id="CHEBI:18420"/>
    </cofactor>
</comment>
<comment type="cofactor">
    <cofactor evidence="1">
        <name>[4Fe-4S] cluster</name>
        <dbReference type="ChEBI" id="CHEBI:49883"/>
    </cofactor>
    <text evidence="1">Binds 1 [4Fe-4S] cluster per subunit. The cluster is chelated by three Cys residues, the fourth Fe has a free coordination site that may bind a sulfur atom transferred from the persulfide of IscS.</text>
</comment>
<comment type="pathway">
    <text evidence="1">tRNA modification.</text>
</comment>
<comment type="subunit">
    <text evidence="1">Homodimer.</text>
</comment>
<comment type="subcellular location">
    <subcellularLocation>
        <location evidence="1">Cytoplasm</location>
    </subcellularLocation>
</comment>
<comment type="miscellaneous">
    <text evidence="1">The thiolation reaction likely consists of two steps: a first activation step by ATP to form an adenylated intermediate of the target base of tRNA, and a second nucleophilic substitution step of the sulfur (S) atom supplied by the hydrosulfide attached to the Fe-S cluster.</text>
</comment>
<comment type="similarity">
    <text evidence="1">Belongs to the TtcA family.</text>
</comment>
<name>TTCA1_FRATH</name>
<reference key="1">
    <citation type="submission" date="2006-03" db="EMBL/GenBank/DDBJ databases">
        <title>Complete genome sequence of Francisella tularensis LVS (Live Vaccine Strain).</title>
        <authorList>
            <person name="Chain P."/>
            <person name="Larimer F."/>
            <person name="Land M."/>
            <person name="Stilwagen S."/>
            <person name="Larsson P."/>
            <person name="Bearden S."/>
            <person name="Chu M."/>
            <person name="Oyston P."/>
            <person name="Forsman M."/>
            <person name="Andersson S."/>
            <person name="Lindler L."/>
            <person name="Titball R."/>
            <person name="Garcia E."/>
        </authorList>
    </citation>
    <scope>NUCLEOTIDE SEQUENCE [LARGE SCALE GENOMIC DNA]</scope>
    <source>
        <strain>LVS</strain>
    </source>
</reference>
<sequence length="251" mass="28765">MTKTEKKLRHYITKAIADYKLLDKGDKAMLCLSGGKDSFGLLKVLHGLIEDKTYDIDLHVYTLDQSQPGWDDSQLRKYLDDLGVSYEIETKNTYGVVIDKVPEGKTYCSLCSRLRRGNIYRYAKEHKMDKIILGHHRDDLIQSLLMSILYQGQIKSMPPKFVTQDGENTVIRPMVLVQERDLIEFAKEENFPIIPCNLCGSQENLKRKKVKKLIQDLALENPKVPSNILNSLSNVLPSHLMDKNLLNSLEN</sequence>
<organism>
    <name type="scientific">Francisella tularensis subsp. holarctica (strain LVS)</name>
    <dbReference type="NCBI Taxonomy" id="376619"/>
    <lineage>
        <taxon>Bacteria</taxon>
        <taxon>Pseudomonadati</taxon>
        <taxon>Pseudomonadota</taxon>
        <taxon>Gammaproteobacteria</taxon>
        <taxon>Thiotrichales</taxon>
        <taxon>Francisellaceae</taxon>
        <taxon>Francisella</taxon>
    </lineage>
</organism>
<protein>
    <recommendedName>
        <fullName evidence="1">tRNA-cytidine(32) 2-sulfurtransferase 1</fullName>
        <ecNumber evidence="1">2.8.1.-</ecNumber>
    </recommendedName>
    <alternativeName>
        <fullName evidence="1">Two-thiocytidine biosynthesis protein A 1</fullName>
    </alternativeName>
    <alternativeName>
        <fullName evidence="1">tRNA 2-thiocytidine biosynthesis protein TtcA 1</fullName>
    </alternativeName>
</protein>
<feature type="chain" id="PRO_0000348731" description="tRNA-cytidine(32) 2-sulfurtransferase 1">
    <location>
        <begin position="1"/>
        <end position="251"/>
    </location>
</feature>
<feature type="short sequence motif" description="PP-loop motif" evidence="1">
    <location>
        <begin position="33"/>
        <end position="38"/>
    </location>
</feature>
<feature type="binding site" evidence="1">
    <location>
        <position position="108"/>
    </location>
    <ligand>
        <name>[4Fe-4S] cluster</name>
        <dbReference type="ChEBI" id="CHEBI:49883"/>
    </ligand>
</feature>
<feature type="binding site" evidence="1">
    <location>
        <position position="111"/>
    </location>
    <ligand>
        <name>[4Fe-4S] cluster</name>
        <dbReference type="ChEBI" id="CHEBI:49883"/>
    </ligand>
</feature>
<feature type="binding site" evidence="1">
    <location>
        <position position="199"/>
    </location>
    <ligand>
        <name>[4Fe-4S] cluster</name>
        <dbReference type="ChEBI" id="CHEBI:49883"/>
    </ligand>
</feature>
<keyword id="KW-0004">4Fe-4S</keyword>
<keyword id="KW-0067">ATP-binding</keyword>
<keyword id="KW-0963">Cytoplasm</keyword>
<keyword id="KW-0408">Iron</keyword>
<keyword id="KW-0411">Iron-sulfur</keyword>
<keyword id="KW-0460">Magnesium</keyword>
<keyword id="KW-0479">Metal-binding</keyword>
<keyword id="KW-0547">Nucleotide-binding</keyword>
<keyword id="KW-1185">Reference proteome</keyword>
<keyword id="KW-0694">RNA-binding</keyword>
<keyword id="KW-0808">Transferase</keyword>
<keyword id="KW-0819">tRNA processing</keyword>
<keyword id="KW-0820">tRNA-binding</keyword>
<evidence type="ECO:0000255" key="1">
    <source>
        <dbReference type="HAMAP-Rule" id="MF_01850"/>
    </source>
</evidence>
<gene>
    <name evidence="1" type="primary">ttcA1</name>
    <name type="ordered locus">FTL_0760</name>
</gene>
<proteinExistence type="inferred from homology"/>
<dbReference type="EC" id="2.8.1.-" evidence="1"/>
<dbReference type="EMBL" id="AM233362">
    <property type="protein sequence ID" value="CAJ79199.1"/>
    <property type="molecule type" value="Genomic_DNA"/>
</dbReference>
<dbReference type="SMR" id="Q2A447"/>
<dbReference type="KEGG" id="ftl:FTL_0760"/>
<dbReference type="Proteomes" id="UP000001944">
    <property type="component" value="Chromosome"/>
</dbReference>
<dbReference type="GO" id="GO:0005737">
    <property type="term" value="C:cytoplasm"/>
    <property type="evidence" value="ECO:0007669"/>
    <property type="project" value="UniProtKB-SubCell"/>
</dbReference>
<dbReference type="GO" id="GO:0051539">
    <property type="term" value="F:4 iron, 4 sulfur cluster binding"/>
    <property type="evidence" value="ECO:0007669"/>
    <property type="project" value="UniProtKB-UniRule"/>
</dbReference>
<dbReference type="GO" id="GO:0005524">
    <property type="term" value="F:ATP binding"/>
    <property type="evidence" value="ECO:0007669"/>
    <property type="project" value="UniProtKB-UniRule"/>
</dbReference>
<dbReference type="GO" id="GO:0000287">
    <property type="term" value="F:magnesium ion binding"/>
    <property type="evidence" value="ECO:0007669"/>
    <property type="project" value="UniProtKB-UniRule"/>
</dbReference>
<dbReference type="GO" id="GO:0016783">
    <property type="term" value="F:sulfurtransferase activity"/>
    <property type="evidence" value="ECO:0007669"/>
    <property type="project" value="UniProtKB-UniRule"/>
</dbReference>
<dbReference type="GO" id="GO:0000049">
    <property type="term" value="F:tRNA binding"/>
    <property type="evidence" value="ECO:0007669"/>
    <property type="project" value="UniProtKB-KW"/>
</dbReference>
<dbReference type="GO" id="GO:0034227">
    <property type="term" value="P:tRNA thio-modification"/>
    <property type="evidence" value="ECO:0007669"/>
    <property type="project" value="UniProtKB-UniRule"/>
</dbReference>
<dbReference type="CDD" id="cd24138">
    <property type="entry name" value="TtcA-like"/>
    <property type="match status" value="1"/>
</dbReference>
<dbReference type="Gene3D" id="3.40.50.620">
    <property type="entry name" value="HUPs"/>
    <property type="match status" value="1"/>
</dbReference>
<dbReference type="HAMAP" id="MF_01850">
    <property type="entry name" value="TtcA"/>
    <property type="match status" value="1"/>
</dbReference>
<dbReference type="InterPro" id="IPR014729">
    <property type="entry name" value="Rossmann-like_a/b/a_fold"/>
</dbReference>
<dbReference type="InterPro" id="IPR011063">
    <property type="entry name" value="TilS/TtcA_N"/>
</dbReference>
<dbReference type="InterPro" id="IPR012089">
    <property type="entry name" value="tRNA_Cyd_32_2_STrfase"/>
</dbReference>
<dbReference type="InterPro" id="IPR035107">
    <property type="entry name" value="tRNA_thiolation_TtcA_Ctu1"/>
</dbReference>
<dbReference type="NCBIfam" id="NF007972">
    <property type="entry name" value="PRK10696.1"/>
    <property type="match status" value="1"/>
</dbReference>
<dbReference type="PANTHER" id="PTHR43686:SF1">
    <property type="entry name" value="AMINOTRAN_5 DOMAIN-CONTAINING PROTEIN"/>
    <property type="match status" value="1"/>
</dbReference>
<dbReference type="PANTHER" id="PTHR43686">
    <property type="entry name" value="SULFURTRANSFERASE-RELATED"/>
    <property type="match status" value="1"/>
</dbReference>
<dbReference type="Pfam" id="PF01171">
    <property type="entry name" value="ATP_bind_3"/>
    <property type="match status" value="1"/>
</dbReference>
<dbReference type="PIRSF" id="PIRSF004976">
    <property type="entry name" value="ATPase_YdaO"/>
    <property type="match status" value="1"/>
</dbReference>
<dbReference type="SUPFAM" id="SSF52402">
    <property type="entry name" value="Adenine nucleotide alpha hydrolases-like"/>
    <property type="match status" value="1"/>
</dbReference>
<accession>Q2A447</accession>